<reference key="1">
    <citation type="journal article" date="2004" name="J. Bacteriol.">
        <title>Complete genome sequence of Rickettsia typhi and comparison with sequences of other Rickettsiae.</title>
        <authorList>
            <person name="McLeod M.P."/>
            <person name="Qin X."/>
            <person name="Karpathy S.E."/>
            <person name="Gioia J."/>
            <person name="Highlander S.K."/>
            <person name="Fox G.E."/>
            <person name="McNeill T.Z."/>
            <person name="Jiang H."/>
            <person name="Muzny D."/>
            <person name="Jacob L.S."/>
            <person name="Hawes A.C."/>
            <person name="Sodergren E."/>
            <person name="Gill R."/>
            <person name="Hume J."/>
            <person name="Morgan M."/>
            <person name="Fan G."/>
            <person name="Amin A.G."/>
            <person name="Gibbs R.A."/>
            <person name="Hong C."/>
            <person name="Yu X.-J."/>
            <person name="Walker D.H."/>
            <person name="Weinstock G.M."/>
        </authorList>
    </citation>
    <scope>NUCLEOTIDE SEQUENCE [LARGE SCALE GENOMIC DNA]</scope>
    <source>
        <strain>ATCC VR-144 / Wilmington</strain>
    </source>
</reference>
<organism>
    <name type="scientific">Rickettsia typhi (strain ATCC VR-144 / Wilmington)</name>
    <dbReference type="NCBI Taxonomy" id="257363"/>
    <lineage>
        <taxon>Bacteria</taxon>
        <taxon>Pseudomonadati</taxon>
        <taxon>Pseudomonadota</taxon>
        <taxon>Alphaproteobacteria</taxon>
        <taxon>Rickettsiales</taxon>
        <taxon>Rickettsiaceae</taxon>
        <taxon>Rickettsieae</taxon>
        <taxon>Rickettsia</taxon>
        <taxon>typhus group</taxon>
    </lineage>
</organism>
<proteinExistence type="inferred from homology"/>
<protein>
    <recommendedName>
        <fullName evidence="1">Aspartate-semialdehyde dehydrogenase</fullName>
        <shortName evidence="1">ASA dehydrogenase</shortName>
        <shortName evidence="1">ASADH</shortName>
        <ecNumber evidence="1">1.2.1.11</ecNumber>
    </recommendedName>
    <alternativeName>
        <fullName evidence="1">Aspartate-beta-semialdehyde dehydrogenase</fullName>
    </alternativeName>
</protein>
<sequence length="338" mass="37675">MTKKYNIAVIGATGNVGRETLNILAERHFPINKIYAIASNNSLGREVRFGAKILHINSLTIFNFYDIDIAFFCAGSNVSKEFIPKATADNCIVIDKTSLFRTDNQVPLIVPEANLSTLKEFNTKNIIANPNCIVIPLVVALKPLDNEIKIKRVVISTYQSVSGAGKAGMDELYDQTKSKYVFRENNPQKFPKQIAFNLFPHIGDFNKDGYTTEETKIAFELSKIMGTHFKTSVTSVRVPVFIGHAISVNIEFSNKIYAKDVEEILQDADGIVTISNNNDLAYISPIEVVGKDAVYVSRIRNDLSKENTINLWITCDNLRKGAALNSVQIAEELINNYL</sequence>
<feature type="chain" id="PRO_0000280940" description="Aspartate-semialdehyde dehydrogenase">
    <location>
        <begin position="1"/>
        <end position="338"/>
    </location>
</feature>
<feature type="active site" description="Acyl-thioester intermediate" evidence="1">
    <location>
        <position position="132"/>
    </location>
</feature>
<feature type="active site" description="Proton acceptor" evidence="1">
    <location>
        <position position="244"/>
    </location>
</feature>
<feature type="binding site" evidence="1">
    <location>
        <begin position="13"/>
        <end position="16"/>
    </location>
    <ligand>
        <name>NADP(+)</name>
        <dbReference type="ChEBI" id="CHEBI:58349"/>
    </ligand>
</feature>
<feature type="binding site" evidence="1">
    <location>
        <begin position="41"/>
        <end position="42"/>
    </location>
    <ligand>
        <name>NADP(+)</name>
        <dbReference type="ChEBI" id="CHEBI:58349"/>
    </ligand>
</feature>
<feature type="binding site" evidence="1">
    <location>
        <position position="101"/>
    </location>
    <ligand>
        <name>phosphate</name>
        <dbReference type="ChEBI" id="CHEBI:43474"/>
    </ligand>
</feature>
<feature type="binding site" evidence="1">
    <location>
        <position position="159"/>
    </location>
    <ligand>
        <name>substrate</name>
    </ligand>
</feature>
<feature type="binding site" evidence="1">
    <location>
        <begin position="162"/>
        <end position="163"/>
    </location>
    <ligand>
        <name>NADP(+)</name>
        <dbReference type="ChEBI" id="CHEBI:58349"/>
    </ligand>
</feature>
<feature type="binding site" evidence="1">
    <location>
        <position position="187"/>
    </location>
    <ligand>
        <name>NADP(+)</name>
        <dbReference type="ChEBI" id="CHEBI:58349"/>
    </ligand>
</feature>
<feature type="binding site" evidence="1">
    <location>
        <position position="216"/>
    </location>
    <ligand>
        <name>phosphate</name>
        <dbReference type="ChEBI" id="CHEBI:43474"/>
    </ligand>
</feature>
<feature type="binding site" evidence="1">
    <location>
        <position position="237"/>
    </location>
    <ligand>
        <name>substrate</name>
    </ligand>
</feature>
<feature type="binding site" evidence="1">
    <location>
        <position position="317"/>
    </location>
    <ligand>
        <name>NADP(+)</name>
        <dbReference type="ChEBI" id="CHEBI:58349"/>
    </ligand>
</feature>
<name>DHAS_RICTY</name>
<keyword id="KW-0028">Amino-acid biosynthesis</keyword>
<keyword id="KW-0220">Diaminopimelate biosynthesis</keyword>
<keyword id="KW-0457">Lysine biosynthesis</keyword>
<keyword id="KW-0486">Methionine biosynthesis</keyword>
<keyword id="KW-0521">NADP</keyword>
<keyword id="KW-0560">Oxidoreductase</keyword>
<keyword id="KW-0791">Threonine biosynthesis</keyword>
<accession>Q68X56</accession>
<comment type="function">
    <text evidence="1">Catalyzes the NADPH-dependent formation of L-aspartate-semialdehyde (L-ASA) by the reductive dephosphorylation of L-aspartyl-4-phosphate.</text>
</comment>
<comment type="catalytic activity">
    <reaction evidence="1">
        <text>L-aspartate 4-semialdehyde + phosphate + NADP(+) = 4-phospho-L-aspartate + NADPH + H(+)</text>
        <dbReference type="Rhea" id="RHEA:24284"/>
        <dbReference type="ChEBI" id="CHEBI:15378"/>
        <dbReference type="ChEBI" id="CHEBI:43474"/>
        <dbReference type="ChEBI" id="CHEBI:57535"/>
        <dbReference type="ChEBI" id="CHEBI:57783"/>
        <dbReference type="ChEBI" id="CHEBI:58349"/>
        <dbReference type="ChEBI" id="CHEBI:537519"/>
        <dbReference type="EC" id="1.2.1.11"/>
    </reaction>
</comment>
<comment type="pathway">
    <text evidence="1">Amino-acid biosynthesis; L-lysine biosynthesis via DAP pathway; (S)-tetrahydrodipicolinate from L-aspartate: step 2/4.</text>
</comment>
<comment type="pathway">
    <text evidence="1">Amino-acid biosynthesis; L-methionine biosynthesis via de novo pathway; L-homoserine from L-aspartate: step 2/3.</text>
</comment>
<comment type="pathway">
    <text evidence="1">Amino-acid biosynthesis; L-threonine biosynthesis; L-threonine from L-aspartate: step 2/5.</text>
</comment>
<comment type="subunit">
    <text evidence="1">Homodimer.</text>
</comment>
<comment type="similarity">
    <text evidence="1">Belongs to the aspartate-semialdehyde dehydrogenase family.</text>
</comment>
<dbReference type="EC" id="1.2.1.11" evidence="1"/>
<dbReference type="EMBL" id="AE017197">
    <property type="protein sequence ID" value="AAU03786.1"/>
    <property type="molecule type" value="Genomic_DNA"/>
</dbReference>
<dbReference type="RefSeq" id="WP_011190770.1">
    <property type="nucleotide sequence ID" value="NC_006142.1"/>
</dbReference>
<dbReference type="SMR" id="Q68X56"/>
<dbReference type="KEGG" id="rty:RT0306"/>
<dbReference type="eggNOG" id="COG0136">
    <property type="taxonomic scope" value="Bacteria"/>
</dbReference>
<dbReference type="HOGENOM" id="CLU_049966_0_1_5"/>
<dbReference type="OrthoDB" id="9805684at2"/>
<dbReference type="UniPathway" id="UPA00034">
    <property type="reaction ID" value="UER00016"/>
</dbReference>
<dbReference type="UniPathway" id="UPA00050">
    <property type="reaction ID" value="UER00463"/>
</dbReference>
<dbReference type="UniPathway" id="UPA00051">
    <property type="reaction ID" value="UER00464"/>
</dbReference>
<dbReference type="Proteomes" id="UP000000604">
    <property type="component" value="Chromosome"/>
</dbReference>
<dbReference type="GO" id="GO:0004073">
    <property type="term" value="F:aspartate-semialdehyde dehydrogenase activity"/>
    <property type="evidence" value="ECO:0007669"/>
    <property type="project" value="UniProtKB-UniRule"/>
</dbReference>
<dbReference type="GO" id="GO:0051287">
    <property type="term" value="F:NAD binding"/>
    <property type="evidence" value="ECO:0007669"/>
    <property type="project" value="InterPro"/>
</dbReference>
<dbReference type="GO" id="GO:0050661">
    <property type="term" value="F:NADP binding"/>
    <property type="evidence" value="ECO:0007669"/>
    <property type="project" value="UniProtKB-UniRule"/>
</dbReference>
<dbReference type="GO" id="GO:0046983">
    <property type="term" value="F:protein dimerization activity"/>
    <property type="evidence" value="ECO:0007669"/>
    <property type="project" value="InterPro"/>
</dbReference>
<dbReference type="GO" id="GO:0071266">
    <property type="term" value="P:'de novo' L-methionine biosynthetic process"/>
    <property type="evidence" value="ECO:0007669"/>
    <property type="project" value="UniProtKB-UniRule"/>
</dbReference>
<dbReference type="GO" id="GO:0019877">
    <property type="term" value="P:diaminopimelate biosynthetic process"/>
    <property type="evidence" value="ECO:0007669"/>
    <property type="project" value="UniProtKB-UniRule"/>
</dbReference>
<dbReference type="GO" id="GO:0009097">
    <property type="term" value="P:isoleucine biosynthetic process"/>
    <property type="evidence" value="ECO:0007669"/>
    <property type="project" value="InterPro"/>
</dbReference>
<dbReference type="GO" id="GO:0009089">
    <property type="term" value="P:lysine biosynthetic process via diaminopimelate"/>
    <property type="evidence" value="ECO:0007669"/>
    <property type="project" value="UniProtKB-UniRule"/>
</dbReference>
<dbReference type="GO" id="GO:0009088">
    <property type="term" value="P:threonine biosynthetic process"/>
    <property type="evidence" value="ECO:0007669"/>
    <property type="project" value="UniProtKB-UniRule"/>
</dbReference>
<dbReference type="CDD" id="cd18131">
    <property type="entry name" value="ASADH_C_bac_euk_like"/>
    <property type="match status" value="1"/>
</dbReference>
<dbReference type="CDD" id="cd02316">
    <property type="entry name" value="VcASADH2_like_N"/>
    <property type="match status" value="1"/>
</dbReference>
<dbReference type="Gene3D" id="3.30.360.10">
    <property type="entry name" value="Dihydrodipicolinate Reductase, domain 2"/>
    <property type="match status" value="1"/>
</dbReference>
<dbReference type="Gene3D" id="3.40.50.720">
    <property type="entry name" value="NAD(P)-binding Rossmann-like Domain"/>
    <property type="match status" value="1"/>
</dbReference>
<dbReference type="HAMAP" id="MF_02121">
    <property type="entry name" value="ASADH"/>
    <property type="match status" value="1"/>
</dbReference>
<dbReference type="InterPro" id="IPR012080">
    <property type="entry name" value="Asp_semialdehyde_DH"/>
</dbReference>
<dbReference type="InterPro" id="IPR005986">
    <property type="entry name" value="Asp_semialdehyde_DH_beta"/>
</dbReference>
<dbReference type="InterPro" id="IPR036291">
    <property type="entry name" value="NAD(P)-bd_dom_sf"/>
</dbReference>
<dbReference type="InterPro" id="IPR000534">
    <property type="entry name" value="Semialdehyde_DH_NAD-bd"/>
</dbReference>
<dbReference type="InterPro" id="IPR012280">
    <property type="entry name" value="Semialdhyde_DH_dimer_dom"/>
</dbReference>
<dbReference type="NCBIfam" id="TIGR01296">
    <property type="entry name" value="asd_B"/>
    <property type="match status" value="1"/>
</dbReference>
<dbReference type="NCBIfam" id="NF011456">
    <property type="entry name" value="PRK14874.1"/>
    <property type="match status" value="1"/>
</dbReference>
<dbReference type="PANTHER" id="PTHR46278:SF2">
    <property type="entry name" value="ASPARTATE-SEMIALDEHYDE DEHYDROGENASE"/>
    <property type="match status" value="1"/>
</dbReference>
<dbReference type="PANTHER" id="PTHR46278">
    <property type="entry name" value="DEHYDROGENASE, PUTATIVE-RELATED"/>
    <property type="match status" value="1"/>
</dbReference>
<dbReference type="Pfam" id="PF01118">
    <property type="entry name" value="Semialdhyde_dh"/>
    <property type="match status" value="1"/>
</dbReference>
<dbReference type="Pfam" id="PF02774">
    <property type="entry name" value="Semialdhyde_dhC"/>
    <property type="match status" value="1"/>
</dbReference>
<dbReference type="PIRSF" id="PIRSF000148">
    <property type="entry name" value="ASA_dh"/>
    <property type="match status" value="1"/>
</dbReference>
<dbReference type="SMART" id="SM00859">
    <property type="entry name" value="Semialdhyde_dh"/>
    <property type="match status" value="1"/>
</dbReference>
<dbReference type="SUPFAM" id="SSF55347">
    <property type="entry name" value="Glyceraldehyde-3-phosphate dehydrogenase-like, C-terminal domain"/>
    <property type="match status" value="1"/>
</dbReference>
<dbReference type="SUPFAM" id="SSF51735">
    <property type="entry name" value="NAD(P)-binding Rossmann-fold domains"/>
    <property type="match status" value="1"/>
</dbReference>
<evidence type="ECO:0000255" key="1">
    <source>
        <dbReference type="HAMAP-Rule" id="MF_02121"/>
    </source>
</evidence>
<gene>
    <name evidence="1" type="primary">asd</name>
    <name type="ordered locus">RT0306</name>
</gene>